<gene>
    <name evidence="1" type="primary">tusA</name>
    <name type="ordered locus">AHA_0133</name>
</gene>
<accession>A0KEK5</accession>
<name>TUSA_AERHH</name>
<comment type="function">
    <text evidence="1">Sulfur carrier protein which probably makes part of a sulfur-relay system.</text>
</comment>
<comment type="subcellular location">
    <subcellularLocation>
        <location evidence="1">Cytoplasm</location>
    </subcellularLocation>
</comment>
<comment type="similarity">
    <text evidence="1">Belongs to the sulfur carrier protein TusA family.</text>
</comment>
<protein>
    <recommendedName>
        <fullName evidence="1">Sulfur carrier protein TusA</fullName>
    </recommendedName>
</protein>
<proteinExistence type="inferred from homology"/>
<dbReference type="EMBL" id="CP000462">
    <property type="protein sequence ID" value="ABK37411.1"/>
    <property type="molecule type" value="Genomic_DNA"/>
</dbReference>
<dbReference type="RefSeq" id="YP_854669.1">
    <property type="nucleotide sequence ID" value="NC_008570.1"/>
</dbReference>
<dbReference type="SMR" id="A0KEK5"/>
<dbReference type="STRING" id="380703.AHA_0133"/>
<dbReference type="EnsemblBacteria" id="ABK37411">
    <property type="protein sequence ID" value="ABK37411"/>
    <property type="gene ID" value="AHA_0133"/>
</dbReference>
<dbReference type="KEGG" id="aha:AHA_0133"/>
<dbReference type="PATRIC" id="fig|380703.7.peg.126"/>
<dbReference type="eggNOG" id="COG0425">
    <property type="taxonomic scope" value="Bacteria"/>
</dbReference>
<dbReference type="HOGENOM" id="CLU_165255_5_0_6"/>
<dbReference type="OrthoDB" id="9797352at2"/>
<dbReference type="Proteomes" id="UP000000756">
    <property type="component" value="Chromosome"/>
</dbReference>
<dbReference type="GO" id="GO:0005737">
    <property type="term" value="C:cytoplasm"/>
    <property type="evidence" value="ECO:0007669"/>
    <property type="project" value="UniProtKB-SubCell"/>
</dbReference>
<dbReference type="GO" id="GO:0097163">
    <property type="term" value="F:sulfur carrier activity"/>
    <property type="evidence" value="ECO:0007669"/>
    <property type="project" value="UniProtKB-UniRule"/>
</dbReference>
<dbReference type="GO" id="GO:0002143">
    <property type="term" value="P:tRNA wobble position uridine thiolation"/>
    <property type="evidence" value="ECO:0007669"/>
    <property type="project" value="InterPro"/>
</dbReference>
<dbReference type="CDD" id="cd03423">
    <property type="entry name" value="SirA"/>
    <property type="match status" value="1"/>
</dbReference>
<dbReference type="Gene3D" id="3.30.110.40">
    <property type="entry name" value="TusA-like domain"/>
    <property type="match status" value="1"/>
</dbReference>
<dbReference type="HAMAP" id="MF_00413">
    <property type="entry name" value="Thiourid_synth_A"/>
    <property type="match status" value="1"/>
</dbReference>
<dbReference type="InterPro" id="IPR022931">
    <property type="entry name" value="Sulphur_carrier_TusA"/>
</dbReference>
<dbReference type="InterPro" id="IPR001455">
    <property type="entry name" value="TusA-like"/>
</dbReference>
<dbReference type="InterPro" id="IPR036868">
    <property type="entry name" value="TusA-like_sf"/>
</dbReference>
<dbReference type="NCBIfam" id="NF001423">
    <property type="entry name" value="PRK00299.1"/>
    <property type="match status" value="1"/>
</dbReference>
<dbReference type="PANTHER" id="PTHR33279:SF2">
    <property type="entry name" value="SULFUR CARRIER PROTEIN TUSA"/>
    <property type="match status" value="1"/>
</dbReference>
<dbReference type="PANTHER" id="PTHR33279">
    <property type="entry name" value="SULFUR CARRIER PROTEIN YEDF-RELATED"/>
    <property type="match status" value="1"/>
</dbReference>
<dbReference type="Pfam" id="PF01206">
    <property type="entry name" value="TusA"/>
    <property type="match status" value="1"/>
</dbReference>
<dbReference type="SUPFAM" id="SSF64307">
    <property type="entry name" value="SirA-like"/>
    <property type="match status" value="1"/>
</dbReference>
<dbReference type="PROSITE" id="PS01148">
    <property type="entry name" value="UPF0033"/>
    <property type="match status" value="1"/>
</dbReference>
<keyword id="KW-0963">Cytoplasm</keyword>
<keyword id="KW-1185">Reference proteome</keyword>
<sequence length="82" mass="9279">MMSALFCDATHELDAIGLRCPEPVMMVRKKVRLMADGETLLVSADDPSTTRDIPSFCRFMDHTLVASETEQAPYRYLIRKGQ</sequence>
<organism>
    <name type="scientific">Aeromonas hydrophila subsp. hydrophila (strain ATCC 7966 / DSM 30187 / BCRC 13018 / CCUG 14551 / JCM 1027 / KCTC 2358 / NCIMB 9240 / NCTC 8049)</name>
    <dbReference type="NCBI Taxonomy" id="380703"/>
    <lineage>
        <taxon>Bacteria</taxon>
        <taxon>Pseudomonadati</taxon>
        <taxon>Pseudomonadota</taxon>
        <taxon>Gammaproteobacteria</taxon>
        <taxon>Aeromonadales</taxon>
        <taxon>Aeromonadaceae</taxon>
        <taxon>Aeromonas</taxon>
    </lineage>
</organism>
<reference key="1">
    <citation type="journal article" date="2006" name="J. Bacteriol.">
        <title>Genome sequence of Aeromonas hydrophila ATCC 7966T: jack of all trades.</title>
        <authorList>
            <person name="Seshadri R."/>
            <person name="Joseph S.W."/>
            <person name="Chopra A.K."/>
            <person name="Sha J."/>
            <person name="Shaw J."/>
            <person name="Graf J."/>
            <person name="Haft D.H."/>
            <person name="Wu M."/>
            <person name="Ren Q."/>
            <person name="Rosovitz M.J."/>
            <person name="Madupu R."/>
            <person name="Tallon L."/>
            <person name="Kim M."/>
            <person name="Jin S."/>
            <person name="Vuong H."/>
            <person name="Stine O.C."/>
            <person name="Ali A."/>
            <person name="Horneman A.J."/>
            <person name="Heidelberg J.F."/>
        </authorList>
    </citation>
    <scope>NUCLEOTIDE SEQUENCE [LARGE SCALE GENOMIC DNA]</scope>
    <source>
        <strain>ATCC 7966 / DSM 30187 / BCRC 13018 / CCUG 14551 / JCM 1027 / KCTC 2358 / NCIMB 9240 / NCTC 8049</strain>
    </source>
</reference>
<evidence type="ECO:0000255" key="1">
    <source>
        <dbReference type="HAMAP-Rule" id="MF_00413"/>
    </source>
</evidence>
<feature type="chain" id="PRO_1000072281" description="Sulfur carrier protein TusA">
    <location>
        <begin position="1"/>
        <end position="82"/>
    </location>
</feature>
<feature type="active site" description="Cysteine persulfide intermediate" evidence="1">
    <location>
        <position position="20"/>
    </location>
</feature>